<keyword id="KW-0687">Ribonucleoprotein</keyword>
<keyword id="KW-0689">Ribosomal protein</keyword>
<reference key="1">
    <citation type="submission" date="2006-09" db="EMBL/GenBank/DDBJ databases">
        <title>Complete sequence of Rhodopseudomonas palustris BisA53.</title>
        <authorList>
            <consortium name="US DOE Joint Genome Institute"/>
            <person name="Copeland A."/>
            <person name="Lucas S."/>
            <person name="Lapidus A."/>
            <person name="Barry K."/>
            <person name="Detter J.C."/>
            <person name="Glavina del Rio T."/>
            <person name="Hammon N."/>
            <person name="Israni S."/>
            <person name="Dalin E."/>
            <person name="Tice H."/>
            <person name="Pitluck S."/>
            <person name="Chain P."/>
            <person name="Malfatti S."/>
            <person name="Shin M."/>
            <person name="Vergez L."/>
            <person name="Schmutz J."/>
            <person name="Larimer F."/>
            <person name="Land M."/>
            <person name="Hauser L."/>
            <person name="Pelletier D.A."/>
            <person name="Kyrpides N."/>
            <person name="Kim E."/>
            <person name="Harwood C.S."/>
            <person name="Oda Y."/>
            <person name="Richardson P."/>
        </authorList>
    </citation>
    <scope>NUCLEOTIDE SEQUENCE [LARGE SCALE GENOMIC DNA]</scope>
    <source>
        <strain>BisA53</strain>
    </source>
</reference>
<sequence>MADMKSDDIRAMSEDQMDEAILGLKKERFNLRFQRATGQLENTSRLREARREIARIKTIAAQKRAAKK</sequence>
<organism>
    <name type="scientific">Rhodopseudomonas palustris (strain BisA53)</name>
    <dbReference type="NCBI Taxonomy" id="316055"/>
    <lineage>
        <taxon>Bacteria</taxon>
        <taxon>Pseudomonadati</taxon>
        <taxon>Pseudomonadota</taxon>
        <taxon>Alphaproteobacteria</taxon>
        <taxon>Hyphomicrobiales</taxon>
        <taxon>Nitrobacteraceae</taxon>
        <taxon>Rhodopseudomonas</taxon>
    </lineage>
</organism>
<proteinExistence type="inferred from homology"/>
<dbReference type="EMBL" id="CP000463">
    <property type="protein sequence ID" value="ABJ07508.1"/>
    <property type="molecule type" value="Genomic_DNA"/>
</dbReference>
<dbReference type="SMR" id="Q07KM6"/>
<dbReference type="STRING" id="316055.RPE_3578"/>
<dbReference type="KEGG" id="rpe:RPE_3578"/>
<dbReference type="eggNOG" id="COG0255">
    <property type="taxonomic scope" value="Bacteria"/>
</dbReference>
<dbReference type="HOGENOM" id="CLU_158491_1_0_5"/>
<dbReference type="OrthoDB" id="9815192at2"/>
<dbReference type="GO" id="GO:0022625">
    <property type="term" value="C:cytosolic large ribosomal subunit"/>
    <property type="evidence" value="ECO:0007669"/>
    <property type="project" value="TreeGrafter"/>
</dbReference>
<dbReference type="GO" id="GO:0003735">
    <property type="term" value="F:structural constituent of ribosome"/>
    <property type="evidence" value="ECO:0007669"/>
    <property type="project" value="InterPro"/>
</dbReference>
<dbReference type="GO" id="GO:0006412">
    <property type="term" value="P:translation"/>
    <property type="evidence" value="ECO:0007669"/>
    <property type="project" value="UniProtKB-UniRule"/>
</dbReference>
<dbReference type="CDD" id="cd00427">
    <property type="entry name" value="Ribosomal_L29_HIP"/>
    <property type="match status" value="1"/>
</dbReference>
<dbReference type="FunFam" id="1.10.287.310:FF:000005">
    <property type="entry name" value="50S ribosomal protein L29"/>
    <property type="match status" value="1"/>
</dbReference>
<dbReference type="Gene3D" id="1.10.287.310">
    <property type="match status" value="1"/>
</dbReference>
<dbReference type="HAMAP" id="MF_00374">
    <property type="entry name" value="Ribosomal_uL29"/>
    <property type="match status" value="1"/>
</dbReference>
<dbReference type="InterPro" id="IPR050063">
    <property type="entry name" value="Ribosomal_protein_uL29"/>
</dbReference>
<dbReference type="InterPro" id="IPR001854">
    <property type="entry name" value="Ribosomal_uL29"/>
</dbReference>
<dbReference type="InterPro" id="IPR018254">
    <property type="entry name" value="Ribosomal_uL29_CS"/>
</dbReference>
<dbReference type="InterPro" id="IPR036049">
    <property type="entry name" value="Ribosomal_uL29_sf"/>
</dbReference>
<dbReference type="NCBIfam" id="TIGR00012">
    <property type="entry name" value="L29"/>
    <property type="match status" value="1"/>
</dbReference>
<dbReference type="PANTHER" id="PTHR10916">
    <property type="entry name" value="60S RIBOSOMAL PROTEIN L35/50S RIBOSOMAL PROTEIN L29"/>
    <property type="match status" value="1"/>
</dbReference>
<dbReference type="PANTHER" id="PTHR10916:SF0">
    <property type="entry name" value="LARGE RIBOSOMAL SUBUNIT PROTEIN UL29C"/>
    <property type="match status" value="1"/>
</dbReference>
<dbReference type="Pfam" id="PF00831">
    <property type="entry name" value="Ribosomal_L29"/>
    <property type="match status" value="1"/>
</dbReference>
<dbReference type="SUPFAM" id="SSF46561">
    <property type="entry name" value="Ribosomal protein L29 (L29p)"/>
    <property type="match status" value="1"/>
</dbReference>
<dbReference type="PROSITE" id="PS00579">
    <property type="entry name" value="RIBOSOMAL_L29"/>
    <property type="match status" value="1"/>
</dbReference>
<gene>
    <name evidence="1" type="primary">rpmC</name>
    <name type="ordered locus">RPE_3578</name>
</gene>
<accession>Q07KM6</accession>
<name>RL29_RHOP5</name>
<protein>
    <recommendedName>
        <fullName evidence="1">Large ribosomal subunit protein uL29</fullName>
    </recommendedName>
    <alternativeName>
        <fullName evidence="2">50S ribosomal protein L29</fullName>
    </alternativeName>
</protein>
<feature type="chain" id="PRO_1000007581" description="Large ribosomal subunit protein uL29">
    <location>
        <begin position="1"/>
        <end position="68"/>
    </location>
</feature>
<comment type="similarity">
    <text evidence="1">Belongs to the universal ribosomal protein uL29 family.</text>
</comment>
<evidence type="ECO:0000255" key="1">
    <source>
        <dbReference type="HAMAP-Rule" id="MF_00374"/>
    </source>
</evidence>
<evidence type="ECO:0000305" key="2"/>